<keyword id="KW-1185">Reference proteome</keyword>
<keyword id="KW-0687">Ribonucleoprotein</keyword>
<keyword id="KW-0689">Ribosomal protein</keyword>
<keyword id="KW-0694">RNA-binding</keyword>
<keyword id="KW-0699">rRNA-binding</keyword>
<keyword id="KW-0820">tRNA-binding</keyword>
<comment type="function">
    <text evidence="1">Located at the top of the head of the 30S subunit, it contacts several helices of the 16S rRNA. In the 70S ribosome it contacts the 23S rRNA (bridge B1a) and protein L5 of the 50S subunit (bridge B1b), connecting the 2 subunits; these bridges are implicated in subunit movement. Contacts the tRNAs in the A and P-sites.</text>
</comment>
<comment type="subunit">
    <text evidence="1">Part of the 30S ribosomal subunit. Forms a loose heterodimer with protein S19. Forms two bridges to the 50S subunit in the 70S ribosome.</text>
</comment>
<comment type="similarity">
    <text evidence="1">Belongs to the universal ribosomal protein uS13 family.</text>
</comment>
<reference key="1">
    <citation type="submission" date="2006-03" db="EMBL/GenBank/DDBJ databases">
        <title>Complete genome sequence of Gemmatimonas aurantiaca T-27 that represents a novel phylum Gemmatimonadetes.</title>
        <authorList>
            <person name="Takasaki K."/>
            <person name="Ichikawa N."/>
            <person name="Miura H."/>
            <person name="Matsushita S."/>
            <person name="Watanabe Y."/>
            <person name="Oguchi A."/>
            <person name="Ankai A."/>
            <person name="Yashiro I."/>
            <person name="Takahashi M."/>
            <person name="Terui Y."/>
            <person name="Fukui S."/>
            <person name="Yokoyama H."/>
            <person name="Tanikawa S."/>
            <person name="Hanada S."/>
            <person name="Kamagata Y."/>
            <person name="Fujita N."/>
        </authorList>
    </citation>
    <scope>NUCLEOTIDE SEQUENCE [LARGE SCALE GENOMIC DNA]</scope>
    <source>
        <strain>DSM 14586 / JCM 11422 / NBRC 100505 / T-27</strain>
    </source>
</reference>
<name>RS13_GEMAT</name>
<dbReference type="EMBL" id="AP009153">
    <property type="protein sequence ID" value="BAH39018.1"/>
    <property type="molecule type" value="Genomic_DNA"/>
</dbReference>
<dbReference type="RefSeq" id="WP_012683465.1">
    <property type="nucleotide sequence ID" value="NC_012489.1"/>
</dbReference>
<dbReference type="SMR" id="C1A4J3"/>
<dbReference type="STRING" id="379066.GAU_1976"/>
<dbReference type="KEGG" id="gau:GAU_1976"/>
<dbReference type="eggNOG" id="COG0099">
    <property type="taxonomic scope" value="Bacteria"/>
</dbReference>
<dbReference type="HOGENOM" id="CLU_103849_1_2_0"/>
<dbReference type="OrthoDB" id="9803610at2"/>
<dbReference type="Proteomes" id="UP000002209">
    <property type="component" value="Chromosome"/>
</dbReference>
<dbReference type="GO" id="GO:0005829">
    <property type="term" value="C:cytosol"/>
    <property type="evidence" value="ECO:0007669"/>
    <property type="project" value="TreeGrafter"/>
</dbReference>
<dbReference type="GO" id="GO:0015935">
    <property type="term" value="C:small ribosomal subunit"/>
    <property type="evidence" value="ECO:0007669"/>
    <property type="project" value="TreeGrafter"/>
</dbReference>
<dbReference type="GO" id="GO:0019843">
    <property type="term" value="F:rRNA binding"/>
    <property type="evidence" value="ECO:0007669"/>
    <property type="project" value="UniProtKB-UniRule"/>
</dbReference>
<dbReference type="GO" id="GO:0003735">
    <property type="term" value="F:structural constituent of ribosome"/>
    <property type="evidence" value="ECO:0007669"/>
    <property type="project" value="InterPro"/>
</dbReference>
<dbReference type="GO" id="GO:0000049">
    <property type="term" value="F:tRNA binding"/>
    <property type="evidence" value="ECO:0007669"/>
    <property type="project" value="UniProtKB-UniRule"/>
</dbReference>
<dbReference type="GO" id="GO:0006412">
    <property type="term" value="P:translation"/>
    <property type="evidence" value="ECO:0007669"/>
    <property type="project" value="UniProtKB-UniRule"/>
</dbReference>
<dbReference type="FunFam" id="1.10.8.50:FF:000001">
    <property type="entry name" value="30S ribosomal protein S13"/>
    <property type="match status" value="1"/>
</dbReference>
<dbReference type="FunFam" id="4.10.910.10:FF:000001">
    <property type="entry name" value="30S ribosomal protein S13"/>
    <property type="match status" value="1"/>
</dbReference>
<dbReference type="Gene3D" id="1.10.8.50">
    <property type="match status" value="1"/>
</dbReference>
<dbReference type="Gene3D" id="4.10.910.10">
    <property type="entry name" value="30s ribosomal protein s13, domain 2"/>
    <property type="match status" value="1"/>
</dbReference>
<dbReference type="HAMAP" id="MF_01315">
    <property type="entry name" value="Ribosomal_uS13"/>
    <property type="match status" value="1"/>
</dbReference>
<dbReference type="InterPro" id="IPR027437">
    <property type="entry name" value="Rbsml_uS13_C"/>
</dbReference>
<dbReference type="InterPro" id="IPR001892">
    <property type="entry name" value="Ribosomal_uS13"/>
</dbReference>
<dbReference type="InterPro" id="IPR010979">
    <property type="entry name" value="Ribosomal_uS13-like_H2TH"/>
</dbReference>
<dbReference type="InterPro" id="IPR019980">
    <property type="entry name" value="Ribosomal_uS13_bac-type"/>
</dbReference>
<dbReference type="InterPro" id="IPR018269">
    <property type="entry name" value="Ribosomal_uS13_CS"/>
</dbReference>
<dbReference type="NCBIfam" id="TIGR03631">
    <property type="entry name" value="uS13_bact"/>
    <property type="match status" value="1"/>
</dbReference>
<dbReference type="PANTHER" id="PTHR10871">
    <property type="entry name" value="30S RIBOSOMAL PROTEIN S13/40S RIBOSOMAL PROTEIN S18"/>
    <property type="match status" value="1"/>
</dbReference>
<dbReference type="PANTHER" id="PTHR10871:SF1">
    <property type="entry name" value="SMALL RIBOSOMAL SUBUNIT PROTEIN US13M"/>
    <property type="match status" value="1"/>
</dbReference>
<dbReference type="Pfam" id="PF00416">
    <property type="entry name" value="Ribosomal_S13"/>
    <property type="match status" value="1"/>
</dbReference>
<dbReference type="PIRSF" id="PIRSF002134">
    <property type="entry name" value="Ribosomal_S13"/>
    <property type="match status" value="1"/>
</dbReference>
<dbReference type="SUPFAM" id="SSF46946">
    <property type="entry name" value="S13-like H2TH domain"/>
    <property type="match status" value="1"/>
</dbReference>
<dbReference type="PROSITE" id="PS00646">
    <property type="entry name" value="RIBOSOMAL_S13_1"/>
    <property type="match status" value="1"/>
</dbReference>
<dbReference type="PROSITE" id="PS50159">
    <property type="entry name" value="RIBOSOMAL_S13_2"/>
    <property type="match status" value="1"/>
</dbReference>
<gene>
    <name evidence="1" type="primary">rpsM</name>
    <name type="ordered locus">GAU_1976</name>
</gene>
<accession>C1A4J3</accession>
<protein>
    <recommendedName>
        <fullName evidence="1">Small ribosomal subunit protein uS13</fullName>
    </recommendedName>
    <alternativeName>
        <fullName evidence="3">30S ribosomal protein S13</fullName>
    </alternativeName>
</protein>
<organism>
    <name type="scientific">Gemmatimonas aurantiaca (strain DSM 14586 / JCM 11422 / NBRC 100505 / T-27)</name>
    <dbReference type="NCBI Taxonomy" id="379066"/>
    <lineage>
        <taxon>Bacteria</taxon>
        <taxon>Pseudomonadati</taxon>
        <taxon>Gemmatimonadota</taxon>
        <taxon>Gemmatimonadia</taxon>
        <taxon>Gemmatimonadales</taxon>
        <taxon>Gemmatimonadaceae</taxon>
        <taxon>Gemmatimonas</taxon>
    </lineage>
</organism>
<evidence type="ECO:0000255" key="1">
    <source>
        <dbReference type="HAMAP-Rule" id="MF_01315"/>
    </source>
</evidence>
<evidence type="ECO:0000256" key="2">
    <source>
        <dbReference type="SAM" id="MobiDB-lite"/>
    </source>
</evidence>
<evidence type="ECO:0000305" key="3"/>
<feature type="chain" id="PRO_1000214395" description="Small ribosomal subunit protein uS13">
    <location>
        <begin position="1"/>
        <end position="125"/>
    </location>
</feature>
<feature type="region of interest" description="Disordered" evidence="2">
    <location>
        <begin position="90"/>
        <end position="125"/>
    </location>
</feature>
<sequence length="125" mass="14152">MARIAGVDLPREKKVEIGLTYIFGIGRKTAQKILEASGVSSAQRVRDLNDNDLNKLRQEIERNHRVEGALRTEVAMNIKRLMDIGSYRGTRHRRGLPVRGQRTHTNARTKKGPRRAIAGKKKVTK</sequence>
<proteinExistence type="inferred from homology"/>